<evidence type="ECO:0000250" key="1"/>
<evidence type="ECO:0000305" key="2"/>
<organism>
    <name type="scientific">Schizosaccharomyces pombe (strain 972 / ATCC 24843)</name>
    <name type="common">Fission yeast</name>
    <dbReference type="NCBI Taxonomy" id="284812"/>
    <lineage>
        <taxon>Eukaryota</taxon>
        <taxon>Fungi</taxon>
        <taxon>Dikarya</taxon>
        <taxon>Ascomycota</taxon>
        <taxon>Taphrinomycotina</taxon>
        <taxon>Schizosaccharomycetes</taxon>
        <taxon>Schizosaccharomycetales</taxon>
        <taxon>Schizosaccharomycetaceae</taxon>
        <taxon>Schizosaccharomyces</taxon>
    </lineage>
</organism>
<gene>
    <name type="ORF">SPBC725.10</name>
</gene>
<dbReference type="EMBL" id="CU329671">
    <property type="protein sequence ID" value="CAA22182.2"/>
    <property type="molecule type" value="Genomic_DNA"/>
</dbReference>
<dbReference type="PIR" id="T40662">
    <property type="entry name" value="T40662"/>
</dbReference>
<dbReference type="RefSeq" id="NP_595490.2">
    <property type="nucleotide sequence ID" value="NM_001021401.2"/>
</dbReference>
<dbReference type="SMR" id="O94327"/>
<dbReference type="BioGRID" id="277611">
    <property type="interactions" value="26"/>
</dbReference>
<dbReference type="FunCoup" id="O94327">
    <property type="interactions" value="18"/>
</dbReference>
<dbReference type="STRING" id="284812.O94327"/>
<dbReference type="SwissPalm" id="O94327"/>
<dbReference type="PaxDb" id="4896-SPBC725.10.1"/>
<dbReference type="EnsemblFungi" id="SPBC725.10.1">
    <property type="protein sequence ID" value="SPBC725.10.1:pep"/>
    <property type="gene ID" value="SPBC725.10"/>
</dbReference>
<dbReference type="PomBase" id="SPBC725.10"/>
<dbReference type="VEuPathDB" id="FungiDB:SPBC725.10"/>
<dbReference type="eggNOG" id="KOG3797">
    <property type="taxonomic scope" value="Eukaryota"/>
</dbReference>
<dbReference type="HOGENOM" id="CLU_091805_0_1_1"/>
<dbReference type="InParanoid" id="O94327"/>
<dbReference type="OMA" id="PIVWTCL"/>
<dbReference type="PRO" id="PR:O94327"/>
<dbReference type="Proteomes" id="UP000002485">
    <property type="component" value="Chromosome II"/>
</dbReference>
<dbReference type="GO" id="GO:0005741">
    <property type="term" value="C:mitochondrial outer membrane"/>
    <property type="evidence" value="ECO:0000318"/>
    <property type="project" value="GO_Central"/>
</dbReference>
<dbReference type="GO" id="GO:0005739">
    <property type="term" value="C:mitochondrion"/>
    <property type="evidence" value="ECO:0007005"/>
    <property type="project" value="PomBase"/>
</dbReference>
<dbReference type="GO" id="GO:0033013">
    <property type="term" value="P:tetrapyrrole metabolic process"/>
    <property type="evidence" value="ECO:0000304"/>
    <property type="project" value="PomBase"/>
</dbReference>
<dbReference type="CDD" id="cd15904">
    <property type="entry name" value="TSPO_MBR"/>
    <property type="match status" value="1"/>
</dbReference>
<dbReference type="FunFam" id="1.20.1260.100:FF:000001">
    <property type="entry name" value="translocator protein 2"/>
    <property type="match status" value="1"/>
</dbReference>
<dbReference type="Gene3D" id="1.20.1260.100">
    <property type="entry name" value="TspO/MBR protein"/>
    <property type="match status" value="1"/>
</dbReference>
<dbReference type="InterPro" id="IPR038330">
    <property type="entry name" value="TspO/MBR-related_sf"/>
</dbReference>
<dbReference type="InterPro" id="IPR004307">
    <property type="entry name" value="TspO_MBR"/>
</dbReference>
<dbReference type="PANTHER" id="PTHR10057">
    <property type="entry name" value="PERIPHERAL-TYPE BENZODIAZEPINE RECEPTOR"/>
    <property type="match status" value="1"/>
</dbReference>
<dbReference type="PANTHER" id="PTHR10057:SF0">
    <property type="entry name" value="TRANSLOCATOR PROTEIN"/>
    <property type="match status" value="1"/>
</dbReference>
<dbReference type="Pfam" id="PF03073">
    <property type="entry name" value="TspO_MBR"/>
    <property type="match status" value="1"/>
</dbReference>
<dbReference type="PIRSF" id="PIRSF005859">
    <property type="entry name" value="PBR"/>
    <property type="match status" value="1"/>
</dbReference>
<proteinExistence type="inferred from homology"/>
<feature type="chain" id="PRO_0000315635" description="Translocator protein homolog">
    <location>
        <begin position="1"/>
        <end position="164"/>
    </location>
</feature>
<feature type="transmembrane region" description="Helical; Name=1" evidence="1">
    <location>
        <begin position="16"/>
        <end position="34"/>
    </location>
</feature>
<feature type="transmembrane region" description="Helical; Name=2" evidence="1">
    <location>
        <begin position="52"/>
        <end position="72"/>
    </location>
</feature>
<feature type="transmembrane region" description="Helical; Name=3" evidence="1">
    <location>
        <begin position="89"/>
        <end position="106"/>
    </location>
</feature>
<feature type="transmembrane region" description="Helical; Name=4" evidence="1">
    <location>
        <begin position="112"/>
        <end position="132"/>
    </location>
</feature>
<feature type="transmembrane region" description="Helical; Name=5" evidence="1">
    <location>
        <begin position="141"/>
        <end position="163"/>
    </location>
</feature>
<accession>O94327</accession>
<keyword id="KW-0472">Membrane</keyword>
<keyword id="KW-0496">Mitochondrion</keyword>
<keyword id="KW-1185">Reference proteome</keyword>
<keyword id="KW-0812">Transmembrane</keyword>
<keyword id="KW-1133">Transmembrane helix</keyword>
<protein>
    <recommendedName>
        <fullName>Translocator protein homolog</fullName>
    </recommendedName>
</protein>
<name>TSPO_SCHPO</name>
<sequence>MDLNYQVFTSISKNWWSASLVPVACGWFIGNSYKPRKDYENKKQPKFHPPASAFGPAWTLLYLTMGYASHLAYKADPLMITNASRNGSILYIAQLAANFAWMPLFYGLAKPKLALADLGILTGLVGWLAKTWWPLAPTASKWLIPYLAWLGYAGYLNLGYCLLN</sequence>
<comment type="function">
    <text evidence="1">May play a role in the transport of porphyrins and heme.</text>
</comment>
<comment type="subcellular location">
    <subcellularLocation>
        <location evidence="2">Mitochondrion membrane</location>
        <topology evidence="2">Multi-pass membrane protein</topology>
    </subcellularLocation>
</comment>
<comment type="similarity">
    <text evidence="2">Belongs to the TspO/BZRP family.</text>
</comment>
<reference key="1">
    <citation type="journal article" date="2002" name="Nature">
        <title>The genome sequence of Schizosaccharomyces pombe.</title>
        <authorList>
            <person name="Wood V."/>
            <person name="Gwilliam R."/>
            <person name="Rajandream M.A."/>
            <person name="Lyne M.H."/>
            <person name="Lyne R."/>
            <person name="Stewart A."/>
            <person name="Sgouros J.G."/>
            <person name="Peat N."/>
            <person name="Hayles J."/>
            <person name="Baker S.G."/>
            <person name="Basham D."/>
            <person name="Bowman S."/>
            <person name="Brooks K."/>
            <person name="Brown D."/>
            <person name="Brown S."/>
            <person name="Chillingworth T."/>
            <person name="Churcher C.M."/>
            <person name="Collins M."/>
            <person name="Connor R."/>
            <person name="Cronin A."/>
            <person name="Davis P."/>
            <person name="Feltwell T."/>
            <person name="Fraser A."/>
            <person name="Gentles S."/>
            <person name="Goble A."/>
            <person name="Hamlin N."/>
            <person name="Harris D.E."/>
            <person name="Hidalgo J."/>
            <person name="Hodgson G."/>
            <person name="Holroyd S."/>
            <person name="Hornsby T."/>
            <person name="Howarth S."/>
            <person name="Huckle E.J."/>
            <person name="Hunt S."/>
            <person name="Jagels K."/>
            <person name="James K.D."/>
            <person name="Jones L."/>
            <person name="Jones M."/>
            <person name="Leather S."/>
            <person name="McDonald S."/>
            <person name="McLean J."/>
            <person name="Mooney P."/>
            <person name="Moule S."/>
            <person name="Mungall K.L."/>
            <person name="Murphy L.D."/>
            <person name="Niblett D."/>
            <person name="Odell C."/>
            <person name="Oliver K."/>
            <person name="O'Neil S."/>
            <person name="Pearson D."/>
            <person name="Quail M.A."/>
            <person name="Rabbinowitsch E."/>
            <person name="Rutherford K.M."/>
            <person name="Rutter S."/>
            <person name="Saunders D."/>
            <person name="Seeger K."/>
            <person name="Sharp S."/>
            <person name="Skelton J."/>
            <person name="Simmonds M.N."/>
            <person name="Squares R."/>
            <person name="Squares S."/>
            <person name="Stevens K."/>
            <person name="Taylor K."/>
            <person name="Taylor R.G."/>
            <person name="Tivey A."/>
            <person name="Walsh S.V."/>
            <person name="Warren T."/>
            <person name="Whitehead S."/>
            <person name="Woodward J.R."/>
            <person name="Volckaert G."/>
            <person name="Aert R."/>
            <person name="Robben J."/>
            <person name="Grymonprez B."/>
            <person name="Weltjens I."/>
            <person name="Vanstreels E."/>
            <person name="Rieger M."/>
            <person name="Schaefer M."/>
            <person name="Mueller-Auer S."/>
            <person name="Gabel C."/>
            <person name="Fuchs M."/>
            <person name="Duesterhoeft A."/>
            <person name="Fritzc C."/>
            <person name="Holzer E."/>
            <person name="Moestl D."/>
            <person name="Hilbert H."/>
            <person name="Borzym K."/>
            <person name="Langer I."/>
            <person name="Beck A."/>
            <person name="Lehrach H."/>
            <person name="Reinhardt R."/>
            <person name="Pohl T.M."/>
            <person name="Eger P."/>
            <person name="Zimmermann W."/>
            <person name="Wedler H."/>
            <person name="Wambutt R."/>
            <person name="Purnelle B."/>
            <person name="Goffeau A."/>
            <person name="Cadieu E."/>
            <person name="Dreano S."/>
            <person name="Gloux S."/>
            <person name="Lelaure V."/>
            <person name="Mottier S."/>
            <person name="Galibert F."/>
            <person name="Aves S.J."/>
            <person name="Xiang Z."/>
            <person name="Hunt C."/>
            <person name="Moore K."/>
            <person name="Hurst S.M."/>
            <person name="Lucas M."/>
            <person name="Rochet M."/>
            <person name="Gaillardin C."/>
            <person name="Tallada V.A."/>
            <person name="Garzon A."/>
            <person name="Thode G."/>
            <person name="Daga R.R."/>
            <person name="Cruzado L."/>
            <person name="Jimenez J."/>
            <person name="Sanchez M."/>
            <person name="del Rey F."/>
            <person name="Benito J."/>
            <person name="Dominguez A."/>
            <person name="Revuelta J.L."/>
            <person name="Moreno S."/>
            <person name="Armstrong J."/>
            <person name="Forsburg S.L."/>
            <person name="Cerutti L."/>
            <person name="Lowe T."/>
            <person name="McCombie W.R."/>
            <person name="Paulsen I."/>
            <person name="Potashkin J."/>
            <person name="Shpakovski G.V."/>
            <person name="Ussery D."/>
            <person name="Barrell B.G."/>
            <person name="Nurse P."/>
        </authorList>
    </citation>
    <scope>NUCLEOTIDE SEQUENCE [LARGE SCALE GENOMIC DNA]</scope>
    <source>
        <strain>972 / ATCC 24843</strain>
    </source>
</reference>
<reference key="2">
    <citation type="journal article" date="2011" name="Science">
        <title>Comparative functional genomics of the fission yeasts.</title>
        <authorList>
            <person name="Rhind N."/>
            <person name="Chen Z."/>
            <person name="Yassour M."/>
            <person name="Thompson D.A."/>
            <person name="Haas B.J."/>
            <person name="Habib N."/>
            <person name="Wapinski I."/>
            <person name="Roy S."/>
            <person name="Lin M.F."/>
            <person name="Heiman D.I."/>
            <person name="Young S.K."/>
            <person name="Furuya K."/>
            <person name="Guo Y."/>
            <person name="Pidoux A."/>
            <person name="Chen H.M."/>
            <person name="Robbertse B."/>
            <person name="Goldberg J.M."/>
            <person name="Aoki K."/>
            <person name="Bayne E.H."/>
            <person name="Berlin A.M."/>
            <person name="Desjardins C.A."/>
            <person name="Dobbs E."/>
            <person name="Dukaj L."/>
            <person name="Fan L."/>
            <person name="FitzGerald M.G."/>
            <person name="French C."/>
            <person name="Gujja S."/>
            <person name="Hansen K."/>
            <person name="Keifenheim D."/>
            <person name="Levin J.Z."/>
            <person name="Mosher R.A."/>
            <person name="Mueller C.A."/>
            <person name="Pfiffner J."/>
            <person name="Priest M."/>
            <person name="Russ C."/>
            <person name="Smialowska A."/>
            <person name="Swoboda P."/>
            <person name="Sykes S.M."/>
            <person name="Vaughn M."/>
            <person name="Vengrova S."/>
            <person name="Yoder R."/>
            <person name="Zeng Q."/>
            <person name="Allshire R."/>
            <person name="Baulcombe D."/>
            <person name="Birren B.W."/>
            <person name="Brown W."/>
            <person name="Ekwall K."/>
            <person name="Kellis M."/>
            <person name="Leatherwood J."/>
            <person name="Levin H."/>
            <person name="Margalit H."/>
            <person name="Martienssen R."/>
            <person name="Nieduszynski C.A."/>
            <person name="Spatafora J.W."/>
            <person name="Friedman N."/>
            <person name="Dalgaard J.Z."/>
            <person name="Baumann P."/>
            <person name="Niki H."/>
            <person name="Regev A."/>
            <person name="Nusbaum C."/>
        </authorList>
    </citation>
    <scope>REVISION OF GENE MODEL</scope>
</reference>
<reference key="3">
    <citation type="journal article" date="2006" name="Nat. Biotechnol.">
        <title>ORFeome cloning and global analysis of protein localization in the fission yeast Schizosaccharomyces pombe.</title>
        <authorList>
            <person name="Matsuyama A."/>
            <person name="Arai R."/>
            <person name="Yashiroda Y."/>
            <person name="Shirai A."/>
            <person name="Kamata A."/>
            <person name="Sekido S."/>
            <person name="Kobayashi Y."/>
            <person name="Hashimoto A."/>
            <person name="Hamamoto M."/>
            <person name="Hiraoka Y."/>
            <person name="Horinouchi S."/>
            <person name="Yoshida M."/>
        </authorList>
    </citation>
    <scope>SUBCELLULAR LOCATION [LARGE SCALE ANALYSIS]</scope>
</reference>